<evidence type="ECO:0000250" key="1"/>
<evidence type="ECO:0000250" key="2">
    <source>
        <dbReference type="UniProtKB" id="O60763"/>
    </source>
</evidence>
<evidence type="ECO:0000250" key="3">
    <source>
        <dbReference type="UniProtKB" id="P41542"/>
    </source>
</evidence>
<evidence type="ECO:0000255" key="4"/>
<evidence type="ECO:0000255" key="5">
    <source>
        <dbReference type="PROSITE-ProRule" id="PRU00259"/>
    </source>
</evidence>
<evidence type="ECO:0000256" key="6">
    <source>
        <dbReference type="SAM" id="MobiDB-lite"/>
    </source>
</evidence>
<evidence type="ECO:0000269" key="7">
    <source>
    </source>
</evidence>
<evidence type="ECO:0000269" key="8">
    <source>
    </source>
</evidence>
<evidence type="ECO:0000305" key="9"/>
<evidence type="ECO:0007829" key="10">
    <source>
        <dbReference type="PDB" id="3GQ2"/>
    </source>
</evidence>
<evidence type="ECO:0007829" key="11">
    <source>
        <dbReference type="PDB" id="3GRL"/>
    </source>
</evidence>
<gene>
    <name type="primary">USO1</name>
    <name type="synonym">VDP</name>
</gene>
<organism>
    <name type="scientific">Bos taurus</name>
    <name type="common">Bovine</name>
    <dbReference type="NCBI Taxonomy" id="9913"/>
    <lineage>
        <taxon>Eukaryota</taxon>
        <taxon>Metazoa</taxon>
        <taxon>Chordata</taxon>
        <taxon>Craniata</taxon>
        <taxon>Vertebrata</taxon>
        <taxon>Euteleostomi</taxon>
        <taxon>Mammalia</taxon>
        <taxon>Eutheria</taxon>
        <taxon>Laurasiatheria</taxon>
        <taxon>Artiodactyla</taxon>
        <taxon>Ruminantia</taxon>
        <taxon>Pecora</taxon>
        <taxon>Bovidae</taxon>
        <taxon>Bovinae</taxon>
        <taxon>Bos</taxon>
    </lineage>
</organism>
<feature type="chain" id="PRO_0000065773" description="General vesicular transport factor p115">
    <location>
        <begin position="1"/>
        <end position="961"/>
    </location>
</feature>
<feature type="repeat" description="ARM 1" evidence="5 7">
    <location>
        <begin position="20"/>
        <end position="60"/>
    </location>
</feature>
<feature type="repeat" description="ARM 2" evidence="5 7">
    <location>
        <begin position="61"/>
        <end position="121"/>
    </location>
</feature>
<feature type="repeat" description="ARM 3" evidence="5 7">
    <location>
        <begin position="123"/>
        <end position="163"/>
    </location>
</feature>
<feature type="repeat" description="ARM 4" evidence="5 7">
    <location>
        <begin position="166"/>
        <end position="207"/>
    </location>
</feature>
<feature type="repeat" description="ARM 5" evidence="5 7">
    <location>
        <begin position="208"/>
        <end position="253"/>
    </location>
</feature>
<feature type="repeat" description="ARM 6" evidence="5 7">
    <location>
        <begin position="255"/>
        <end position="310"/>
    </location>
</feature>
<feature type="repeat" description="ARM 7" evidence="5 7">
    <location>
        <begin position="311"/>
        <end position="354"/>
    </location>
</feature>
<feature type="repeat" description="ARM 8" evidence="5 7">
    <location>
        <begin position="363"/>
        <end position="408"/>
    </location>
</feature>
<feature type="repeat" description="ARM 9" evidence="5 7">
    <location>
        <begin position="420"/>
        <end position="459"/>
    </location>
</feature>
<feature type="repeat" description="ARM 10" evidence="5 7">
    <location>
        <begin position="473"/>
        <end position="513"/>
    </location>
</feature>
<feature type="repeat" description="ARM 11" evidence="5 7">
    <location>
        <begin position="518"/>
        <end position="571"/>
    </location>
</feature>
<feature type="repeat" description="ARM 12" evidence="5 7">
    <location>
        <begin position="573"/>
        <end position="630"/>
    </location>
</feature>
<feature type="region of interest" description="Globular head">
    <location>
        <begin position="1"/>
        <end position="641"/>
    </location>
</feature>
<feature type="region of interest" description="Disordered" evidence="6">
    <location>
        <begin position="764"/>
        <end position="784"/>
    </location>
</feature>
<feature type="region of interest" description="Disordered" evidence="6">
    <location>
        <begin position="929"/>
        <end position="961"/>
    </location>
</feature>
<feature type="coiled-coil region" evidence="4">
    <location>
        <begin position="642"/>
        <end position="929"/>
    </location>
</feature>
<feature type="compositionally biased region" description="Polar residues" evidence="6">
    <location>
        <begin position="764"/>
        <end position="782"/>
    </location>
</feature>
<feature type="compositionally biased region" description="Acidic residues" evidence="6">
    <location>
        <begin position="934"/>
        <end position="955"/>
    </location>
</feature>
<feature type="modified residue" description="Phosphoserine" evidence="2">
    <location>
        <position position="50"/>
    </location>
</feature>
<feature type="modified residue" description="N6-acetyllysine" evidence="2">
    <location>
        <position position="202"/>
    </location>
</feature>
<feature type="modified residue" description="Phosphoserine" evidence="2">
    <location>
        <position position="941"/>
    </location>
</feature>
<feature type="sequence conflict" description="In Ref. 2; AAI08113." evidence="9" ref="2">
    <original>N</original>
    <variation>K</variation>
    <location>
        <position position="335"/>
    </location>
</feature>
<feature type="helix" evidence="11">
    <location>
        <begin position="19"/>
        <end position="32"/>
    </location>
</feature>
<feature type="helix" evidence="11">
    <location>
        <begin position="36"/>
        <end position="48"/>
    </location>
</feature>
<feature type="turn" evidence="11">
    <location>
        <begin position="49"/>
        <end position="55"/>
    </location>
</feature>
<feature type="helix" evidence="11">
    <location>
        <begin position="56"/>
        <end position="60"/>
    </location>
</feature>
<feature type="helix" evidence="11">
    <location>
        <begin position="62"/>
        <end position="70"/>
    </location>
</feature>
<feature type="helix" evidence="11">
    <location>
        <begin position="76"/>
        <end position="90"/>
    </location>
</feature>
<feature type="strand" evidence="10">
    <location>
        <begin position="93"/>
        <end position="95"/>
    </location>
</feature>
<feature type="helix" evidence="11">
    <location>
        <begin position="109"/>
        <end position="118"/>
    </location>
</feature>
<feature type="helix" evidence="11">
    <location>
        <begin position="122"/>
        <end position="130"/>
    </location>
</feature>
<feature type="helix" evidence="11">
    <location>
        <begin position="136"/>
        <end position="152"/>
    </location>
</feature>
<feature type="helix" evidence="11">
    <location>
        <begin position="154"/>
        <end position="163"/>
    </location>
</feature>
<feature type="helix" evidence="11">
    <location>
        <begin position="167"/>
        <end position="172"/>
    </location>
</feature>
<feature type="helix" evidence="11">
    <location>
        <begin position="173"/>
        <end position="176"/>
    </location>
</feature>
<feature type="helix" evidence="11">
    <location>
        <begin position="180"/>
        <end position="194"/>
    </location>
</feature>
<feature type="helix" evidence="11">
    <location>
        <begin position="198"/>
        <end position="206"/>
    </location>
</feature>
<feature type="helix" evidence="11">
    <location>
        <begin position="209"/>
        <end position="220"/>
    </location>
</feature>
<feature type="helix" evidence="11">
    <location>
        <begin position="222"/>
        <end position="224"/>
    </location>
</feature>
<feature type="helix" evidence="11">
    <location>
        <begin position="226"/>
        <end position="240"/>
    </location>
</feature>
<feature type="helix" evidence="11">
    <location>
        <begin position="244"/>
        <end position="252"/>
    </location>
</feature>
<feature type="helix" evidence="11">
    <location>
        <begin position="256"/>
        <end position="263"/>
    </location>
</feature>
<feature type="helix" evidence="11">
    <location>
        <begin position="274"/>
        <end position="290"/>
    </location>
</feature>
<feature type="helix" evidence="11">
    <location>
        <begin position="297"/>
        <end position="309"/>
    </location>
</feature>
<feature type="helix" evidence="11">
    <location>
        <begin position="312"/>
        <end position="320"/>
    </location>
</feature>
<feature type="helix" evidence="11">
    <location>
        <begin position="327"/>
        <end position="341"/>
    </location>
</feature>
<feature type="helix" evidence="11">
    <location>
        <begin position="345"/>
        <end position="353"/>
    </location>
</feature>
<feature type="strand" evidence="11">
    <location>
        <begin position="355"/>
        <end position="360"/>
    </location>
</feature>
<feature type="helix" evidence="11">
    <location>
        <begin position="364"/>
        <end position="372"/>
    </location>
</feature>
<feature type="helix" evidence="11">
    <location>
        <begin position="379"/>
        <end position="393"/>
    </location>
</feature>
<feature type="helix" evidence="11">
    <location>
        <begin position="397"/>
        <end position="405"/>
    </location>
</feature>
<feature type="strand" evidence="11">
    <location>
        <begin position="417"/>
        <end position="419"/>
    </location>
</feature>
<feature type="helix" evidence="11">
    <location>
        <begin position="421"/>
        <end position="429"/>
    </location>
</feature>
<feature type="helix" evidence="11">
    <location>
        <begin position="434"/>
        <end position="448"/>
    </location>
</feature>
<feature type="helix" evidence="11">
    <location>
        <begin position="452"/>
        <end position="458"/>
    </location>
</feature>
<feature type="helix" evidence="11">
    <location>
        <begin position="474"/>
        <end position="481"/>
    </location>
</feature>
<feature type="turn" evidence="11">
    <location>
        <begin position="482"/>
        <end position="485"/>
    </location>
</feature>
<feature type="helix" evidence="11">
    <location>
        <begin position="488"/>
        <end position="502"/>
    </location>
</feature>
<feature type="helix" evidence="11">
    <location>
        <begin position="506"/>
        <end position="514"/>
    </location>
</feature>
<feature type="helix" evidence="11">
    <location>
        <begin position="518"/>
        <end position="527"/>
    </location>
</feature>
<feature type="helix" evidence="11">
    <location>
        <begin position="532"/>
        <end position="550"/>
    </location>
</feature>
<feature type="helix" evidence="11">
    <location>
        <begin position="557"/>
        <end position="559"/>
    </location>
</feature>
<feature type="helix" evidence="11">
    <location>
        <begin position="561"/>
        <end position="571"/>
    </location>
</feature>
<feature type="helix" evidence="11">
    <location>
        <begin position="574"/>
        <end position="586"/>
    </location>
</feature>
<feature type="helix" evidence="11">
    <location>
        <begin position="590"/>
        <end position="595"/>
    </location>
</feature>
<feature type="helix" evidence="11">
    <location>
        <begin position="604"/>
        <end position="606"/>
    </location>
</feature>
<feature type="helix" evidence="11">
    <location>
        <begin position="611"/>
        <end position="629"/>
    </location>
</feature>
<feature type="helix" evidence="10">
    <location>
        <begin position="633"/>
        <end position="638"/>
    </location>
</feature>
<keyword id="KW-0002">3D-structure</keyword>
<keyword id="KW-0007">Acetylation</keyword>
<keyword id="KW-0175">Coiled coil</keyword>
<keyword id="KW-0963">Cytoplasm</keyword>
<keyword id="KW-0903">Direct protein sequencing</keyword>
<keyword id="KW-0931">ER-Golgi transport</keyword>
<keyword id="KW-0333">Golgi apparatus</keyword>
<keyword id="KW-0472">Membrane</keyword>
<keyword id="KW-0597">Phosphoprotein</keyword>
<keyword id="KW-0653">Protein transport</keyword>
<keyword id="KW-1185">Reference proteome</keyword>
<keyword id="KW-0677">Repeat</keyword>
<keyword id="KW-0813">Transport</keyword>
<proteinExistence type="evidence at protein level"/>
<reference key="1">
    <citation type="journal article" date="1995" name="Proc. Natl. Acad. Sci. U.S.A.">
        <title>p115 is a general vesicular transport factor related to the yeast endoplasmic reticulum to Golgi transport factor Uso1p.</title>
        <authorList>
            <person name="Sapperstein S.K."/>
            <person name="Walter D.M."/>
            <person name="Grosvenor A.R."/>
            <person name="Heuser J.E."/>
            <person name="Waters M.G."/>
        </authorList>
    </citation>
    <scope>NUCLEOTIDE SEQUENCE [MRNA]</scope>
    <scope>PARTIAL PROTEIN SEQUENCE</scope>
    <scope>SUBUNIT</scope>
    <scope>DOMAIN</scope>
    <source>
        <tissue>Kidney</tissue>
    </source>
</reference>
<reference key="2">
    <citation type="submission" date="2005-10" db="EMBL/GenBank/DDBJ databases">
        <authorList>
            <consortium name="NIH - Mammalian Gene Collection (MGC) project"/>
        </authorList>
    </citation>
    <scope>NUCLEOTIDE SEQUENCE [LARGE SCALE MRNA]</scope>
    <source>
        <strain>Hereford</strain>
        <tissue>Thymus</tissue>
    </source>
</reference>
<reference key="3">
    <citation type="journal article" date="1992" name="J. Cell Biol.">
        <title>A novel 115-kD peripheral membrane protein is required for intercisternal transport in the Golgi stack.</title>
        <authorList>
            <person name="Waters M.G."/>
            <person name="Clary D.O."/>
            <person name="Rothman J.E."/>
        </authorList>
    </citation>
    <scope>CHARACTERIZATION</scope>
</reference>
<reference key="4">
    <citation type="journal article" date="2009" name="J. Mol. Biol.">
        <title>Structural and functional analysis of the globular head domain of p115 provides insight into membrane tethering.</title>
        <authorList>
            <person name="An Y."/>
            <person name="Chen C.Y."/>
            <person name="Moyer B."/>
            <person name="Rotkiewicz P."/>
            <person name="Elsliger M.A."/>
            <person name="Godzik A."/>
            <person name="Wilson I.A."/>
            <person name="Balch W.E."/>
        </authorList>
    </citation>
    <scope>X-RAY CRYSTALLOGRAPHY (2.18 ANGSTROMS) OF 1-651</scope>
    <scope>ARM REPEATS</scope>
    <scope>SUBUNIT</scope>
</reference>
<protein>
    <recommendedName>
        <fullName>General vesicular transport factor p115</fullName>
    </recommendedName>
    <alternativeName>
        <fullName>Protein USO1 homolog</fullName>
    </alternativeName>
    <alternativeName>
        <fullName>Transcytosis-associated protein</fullName>
        <shortName>TAP</shortName>
    </alternativeName>
    <alternativeName>
        <fullName>Vesicle-docking protein</fullName>
    </alternativeName>
</protein>
<sequence>MNFLRGVMGGQSAGPQHTEAETIQKLCDRVASSTLLDDRRNAVRALKSLSKKYRLEVGIQAMEHLIHVLQTDRSDSEIIGYALDTLYNIISNDEEEEVEENSTRQSEDLGSQFTEIFIKQQENVTLLLSLLEEFDFHVRWPGVKLLTSLLKQLGPQVQQIILVSPMGVSRLMDLLADSREVIRNDGVLLLQALTRSNGAIQKIVAFENAFERLLDIITEEGNSDGGIVVEDCLILLQNLLKNNNSNQNFFKEGSYIQRMKPWFEVGDENSGWSAQKVTNLHLMLQLVRVLVSPNNPPGATSSCQKAMFQCGLLQQLCTILMATGVPADILTETINTVSEVIRGCQVNQDYFASVNAPSNPPRPAIVVLLMSMVNERQPFVLRCAVLYCFQCFLYKNQKGQGEIVSTLLPSTIDATGNTVSAGQLLCGGLFSTDSLSNWCAAVALAHALQENATQKEQLLRVQLATSIGNPPVSLLQQCTNILSQGSKIQTRVGLLMLLCTWLSNCPIAVTHFLHNSANVPFLTGQIAENLGEEEQLVQGLCALLLGISIYFNDNSLETYMKEKLKQLIEKRIGKENFIEKLGFISKHELYSRASQKPQPNFPSPEYMIFDHEFTKLVKELEGVITKAIYKSSEEDKKEEEVKKTLEQHDSIVTHYKNMIREQDLQLEELKQQISTLKCQNEQLQTAVTQQVSQIQQHKDQYNLLKVQLGKDSQHQGPYTDGAQMNGVQPEEISRLREEIEELKSNRELLQSQLAEKDSLIENLKSSQLSPGTNEQSSATAGDSEQIAELKQELATLKSQLNSQSVEITKLQTEKQELLQKTEAFAKSAPVPGESETVIATKTTDVEGRLSALLQETKELKNEIKALSEERTAIKEQLDSSNSTIAILQNEKNKLEVDITDSKKEQDDLLVLLADQDQKIFSLKNKLKELGHPVEEEDELESGDQDDEDDEDEDDGKEQGHI</sequence>
<name>USO1_BOVIN</name>
<comment type="function">
    <text evidence="3">General vesicular transport factor required for intercisternal transport in the Golgi stack; it is required for transcytotic fusion and/or subsequent binding of the vesicles to the target membrane. May well act as a vesicular anchor by interacting with the target membrane and holding the vesicular and target membranes in proximity.</text>
</comment>
<comment type="subunit">
    <text evidence="1">Homodimer. Dimerizes by parallel association of the tails, resulting in an elongated structure with two globular head domains side by side, and a long rod-like tail structure. Interacts with MIF (By similarity).</text>
</comment>
<comment type="subcellular location">
    <subcellularLocation>
        <location>Cytoplasm</location>
        <location>Cytosol</location>
    </subcellularLocation>
    <subcellularLocation>
        <location>Golgi apparatus membrane</location>
        <topology>Peripheral membrane protein</topology>
    </subcellularLocation>
    <text>Recycles between the cytosol and the Golgi apparatus during interphase.</text>
</comment>
<comment type="domain">
    <text evidence="8">Composed of a globular head, an elongated tail (coiled-coil) and a highly acidic C-terminal domain.</text>
</comment>
<comment type="PTM">
    <text evidence="1">Phosphorylated in a cell cycle-specific manner; phosphorylated in interphase but not in mitotic cells. Dephosphorylated protein associates with the Golgi membrane; phosphorylation promotes dissociation (By similarity).</text>
</comment>
<comment type="similarity">
    <text evidence="9">Belongs to the VDP/USO1/EDE1 family.</text>
</comment>
<accession>P41541</accession>
<accession>Q32PH6</accession>
<dbReference type="EMBL" id="U14186">
    <property type="protein sequence ID" value="AAA62631.1"/>
    <property type="molecule type" value="mRNA"/>
</dbReference>
<dbReference type="EMBL" id="BC108112">
    <property type="protein sequence ID" value="AAI08113.1"/>
    <property type="molecule type" value="mRNA"/>
</dbReference>
<dbReference type="RefSeq" id="NP_777270.2">
    <property type="nucleotide sequence ID" value="NM_174845.2"/>
</dbReference>
<dbReference type="PDB" id="3GQ2">
    <property type="method" value="X-ray"/>
    <property type="resolution" value="2.18 A"/>
    <property type="chains" value="A/B=1-651"/>
</dbReference>
<dbReference type="PDB" id="3GRL">
    <property type="method" value="X-ray"/>
    <property type="resolution" value="2.00 A"/>
    <property type="chains" value="A=1-651"/>
</dbReference>
<dbReference type="PDBsum" id="3GQ2"/>
<dbReference type="PDBsum" id="3GRL"/>
<dbReference type="SMR" id="P41541"/>
<dbReference type="FunCoup" id="P41541">
    <property type="interactions" value="3865"/>
</dbReference>
<dbReference type="STRING" id="9913.ENSBTAP00000022642"/>
<dbReference type="iPTMnet" id="P41541"/>
<dbReference type="PaxDb" id="9913-ENSBTAP00000022642"/>
<dbReference type="PeptideAtlas" id="P41541"/>
<dbReference type="Ensembl" id="ENSBTAT00000022642.5">
    <property type="protein sequence ID" value="ENSBTAP00000022642.4"/>
    <property type="gene ID" value="ENSBTAG00000017028.7"/>
</dbReference>
<dbReference type="GeneID" id="317724"/>
<dbReference type="KEGG" id="bta:317724"/>
<dbReference type="CTD" id="8615"/>
<dbReference type="VEuPathDB" id="HostDB:ENSBTAG00000017028"/>
<dbReference type="VGNC" id="VGNC:36708">
    <property type="gene designation" value="USO1"/>
</dbReference>
<dbReference type="eggNOG" id="KOG0946">
    <property type="taxonomic scope" value="Eukaryota"/>
</dbReference>
<dbReference type="GeneTree" id="ENSGT00390000017018"/>
<dbReference type="HOGENOM" id="CLU_006318_2_0_1"/>
<dbReference type="InParanoid" id="P41541"/>
<dbReference type="OMA" id="GQETFCN"/>
<dbReference type="OrthoDB" id="198977at2759"/>
<dbReference type="TreeFam" id="TF106157"/>
<dbReference type="Reactome" id="R-BTA-204005">
    <property type="pathway name" value="COPII-mediated vesicle transport"/>
</dbReference>
<dbReference type="Reactome" id="R-BTA-6807878">
    <property type="pathway name" value="COPI-mediated anterograde transport"/>
</dbReference>
<dbReference type="EvolutionaryTrace" id="P41541"/>
<dbReference type="Proteomes" id="UP000009136">
    <property type="component" value="Chromosome 6"/>
</dbReference>
<dbReference type="Bgee" id="ENSBTAG00000017028">
    <property type="expression patterns" value="Expressed in saliva-secreting gland and 107 other cell types or tissues"/>
</dbReference>
<dbReference type="GO" id="GO:0098548">
    <property type="term" value="C:cytoplasmic side of Golgi membrane"/>
    <property type="evidence" value="ECO:0000314"/>
    <property type="project" value="AgBase"/>
</dbReference>
<dbReference type="GO" id="GO:0005829">
    <property type="term" value="C:cytosol"/>
    <property type="evidence" value="ECO:0000314"/>
    <property type="project" value="AgBase"/>
</dbReference>
<dbReference type="GO" id="GO:0005783">
    <property type="term" value="C:endoplasmic reticulum"/>
    <property type="evidence" value="ECO:0000318"/>
    <property type="project" value="GO_Central"/>
</dbReference>
<dbReference type="GO" id="GO:0012507">
    <property type="term" value="C:ER to Golgi transport vesicle membrane"/>
    <property type="evidence" value="ECO:0000318"/>
    <property type="project" value="GO_Central"/>
</dbReference>
<dbReference type="GO" id="GO:0005795">
    <property type="term" value="C:Golgi stack"/>
    <property type="evidence" value="ECO:0000318"/>
    <property type="project" value="GO_Central"/>
</dbReference>
<dbReference type="GO" id="GO:0048471">
    <property type="term" value="C:perinuclear region of cytoplasm"/>
    <property type="evidence" value="ECO:0000250"/>
    <property type="project" value="AgBase"/>
</dbReference>
<dbReference type="GO" id="GO:0042802">
    <property type="term" value="F:identical protein binding"/>
    <property type="evidence" value="ECO:0000353"/>
    <property type="project" value="AgBase"/>
</dbReference>
<dbReference type="GO" id="GO:0006888">
    <property type="term" value="P:endoplasmic reticulum to Golgi vesicle-mediated transport"/>
    <property type="evidence" value="ECO:0000318"/>
    <property type="project" value="GO_Central"/>
</dbReference>
<dbReference type="GO" id="GO:0048211">
    <property type="term" value="P:Golgi vesicle docking"/>
    <property type="evidence" value="ECO:0000318"/>
    <property type="project" value="GO_Central"/>
</dbReference>
<dbReference type="GO" id="GO:0048219">
    <property type="term" value="P:inter-Golgi cisterna vesicle-mediated transport"/>
    <property type="evidence" value="ECO:0000315"/>
    <property type="project" value="AgBase"/>
</dbReference>
<dbReference type="GO" id="GO:0006886">
    <property type="term" value="P:intracellular protein transport"/>
    <property type="evidence" value="ECO:0000250"/>
    <property type="project" value="AgBase"/>
</dbReference>
<dbReference type="GO" id="GO:0061025">
    <property type="term" value="P:membrane fusion"/>
    <property type="evidence" value="ECO:0000318"/>
    <property type="project" value="GO_Central"/>
</dbReference>
<dbReference type="GO" id="GO:0051260">
    <property type="term" value="P:protein homooligomerization"/>
    <property type="evidence" value="ECO:0000314"/>
    <property type="project" value="AgBase"/>
</dbReference>
<dbReference type="GO" id="GO:0045056">
    <property type="term" value="P:transcytosis"/>
    <property type="evidence" value="ECO:0000318"/>
    <property type="project" value="GO_Central"/>
</dbReference>
<dbReference type="GO" id="GO:0048280">
    <property type="term" value="P:vesicle fusion with Golgi apparatus"/>
    <property type="evidence" value="ECO:0007669"/>
    <property type="project" value="InterPro"/>
</dbReference>
<dbReference type="FunFam" id="1.25.10.10:FF:000054">
    <property type="entry name" value="General vesicular transport factor p115"/>
    <property type="match status" value="1"/>
</dbReference>
<dbReference type="Gene3D" id="1.25.10.10">
    <property type="entry name" value="Leucine-rich Repeat Variant"/>
    <property type="match status" value="1"/>
</dbReference>
<dbReference type="InterPro" id="IPR011989">
    <property type="entry name" value="ARM-like"/>
</dbReference>
<dbReference type="InterPro" id="IPR016024">
    <property type="entry name" value="ARM-type_fold"/>
</dbReference>
<dbReference type="InterPro" id="IPR000225">
    <property type="entry name" value="Armadillo"/>
</dbReference>
<dbReference type="InterPro" id="IPR041209">
    <property type="entry name" value="P115_Arm_rpt"/>
</dbReference>
<dbReference type="InterPro" id="IPR006955">
    <property type="entry name" value="Uso1_p115_C"/>
</dbReference>
<dbReference type="InterPro" id="IPR024095">
    <property type="entry name" value="Vesicle_P115"/>
</dbReference>
<dbReference type="InterPro" id="IPR006953">
    <property type="entry name" value="Vesicle_Uso1_P115_head"/>
</dbReference>
<dbReference type="PANTHER" id="PTHR10013">
    <property type="entry name" value="GENERAL VESICULAR TRANSPORT FACTOR P115"/>
    <property type="match status" value="1"/>
</dbReference>
<dbReference type="PANTHER" id="PTHR10013:SF0">
    <property type="entry name" value="GENERAL VESICULAR TRANSPORT FACTOR P115"/>
    <property type="match status" value="1"/>
</dbReference>
<dbReference type="Pfam" id="PF18770">
    <property type="entry name" value="Arm_vescicular"/>
    <property type="match status" value="1"/>
</dbReference>
<dbReference type="Pfam" id="PF04871">
    <property type="entry name" value="Uso1_p115_C"/>
    <property type="match status" value="1"/>
</dbReference>
<dbReference type="Pfam" id="PF04869">
    <property type="entry name" value="Uso1_p115_head"/>
    <property type="match status" value="1"/>
</dbReference>
<dbReference type="SMART" id="SM00185">
    <property type="entry name" value="ARM"/>
    <property type="match status" value="3"/>
</dbReference>
<dbReference type="SUPFAM" id="SSF48371">
    <property type="entry name" value="ARM repeat"/>
    <property type="match status" value="2"/>
</dbReference>
<dbReference type="PROSITE" id="PS50176">
    <property type="entry name" value="ARM_REPEAT"/>
    <property type="match status" value="1"/>
</dbReference>